<accession>Q7VKL5</accession>
<proteinExistence type="inferred from homology"/>
<sequence length="120" mass="12218">MSLTNEQIIEAIASKSVSEIVELITAMEEKFGVSAAAAVAAAPAAAAAEEKTEFDVVLANAGANKVAVIKAVRGATGLGLKEAKDLVESAPATLKEGISKPEAEALKKELEDAGAQVEIK</sequence>
<reference key="1">
    <citation type="submission" date="2003-06" db="EMBL/GenBank/DDBJ databases">
        <title>The complete genome sequence of Haemophilus ducreyi.</title>
        <authorList>
            <person name="Munson R.S. Jr."/>
            <person name="Ray W.C."/>
            <person name="Mahairas G."/>
            <person name="Sabo P."/>
            <person name="Mungur R."/>
            <person name="Johnson L."/>
            <person name="Nguyen D."/>
            <person name="Wang J."/>
            <person name="Forst C."/>
            <person name="Hood L."/>
        </authorList>
    </citation>
    <scope>NUCLEOTIDE SEQUENCE [LARGE SCALE GENOMIC DNA]</scope>
    <source>
        <strain>35000HP / ATCC 700724</strain>
    </source>
</reference>
<gene>
    <name evidence="1" type="primary">rplL</name>
    <name type="ordered locus">HD_1879</name>
</gene>
<keyword id="KW-1185">Reference proteome</keyword>
<keyword id="KW-0687">Ribonucleoprotein</keyword>
<keyword id="KW-0689">Ribosomal protein</keyword>
<name>RL7_HAEDU</name>
<organism>
    <name type="scientific">Haemophilus ducreyi (strain 35000HP / ATCC 700724)</name>
    <dbReference type="NCBI Taxonomy" id="233412"/>
    <lineage>
        <taxon>Bacteria</taxon>
        <taxon>Pseudomonadati</taxon>
        <taxon>Pseudomonadota</taxon>
        <taxon>Gammaproteobacteria</taxon>
        <taxon>Pasteurellales</taxon>
        <taxon>Pasteurellaceae</taxon>
        <taxon>Haemophilus</taxon>
    </lineage>
</organism>
<dbReference type="EMBL" id="AE017143">
    <property type="protein sequence ID" value="AAP96610.1"/>
    <property type="molecule type" value="Genomic_DNA"/>
</dbReference>
<dbReference type="RefSeq" id="WP_010945639.1">
    <property type="nucleotide sequence ID" value="NC_002940.2"/>
</dbReference>
<dbReference type="SMR" id="Q7VKL5"/>
<dbReference type="STRING" id="233412.HD_1879"/>
<dbReference type="KEGG" id="hdu:HD_1879"/>
<dbReference type="eggNOG" id="COG0222">
    <property type="taxonomic scope" value="Bacteria"/>
</dbReference>
<dbReference type="HOGENOM" id="CLU_086499_3_2_6"/>
<dbReference type="OrthoDB" id="9811748at2"/>
<dbReference type="Proteomes" id="UP000001022">
    <property type="component" value="Chromosome"/>
</dbReference>
<dbReference type="GO" id="GO:0022625">
    <property type="term" value="C:cytosolic large ribosomal subunit"/>
    <property type="evidence" value="ECO:0007669"/>
    <property type="project" value="TreeGrafter"/>
</dbReference>
<dbReference type="GO" id="GO:0003729">
    <property type="term" value="F:mRNA binding"/>
    <property type="evidence" value="ECO:0007669"/>
    <property type="project" value="TreeGrafter"/>
</dbReference>
<dbReference type="GO" id="GO:0003735">
    <property type="term" value="F:structural constituent of ribosome"/>
    <property type="evidence" value="ECO:0007669"/>
    <property type="project" value="InterPro"/>
</dbReference>
<dbReference type="GO" id="GO:0006412">
    <property type="term" value="P:translation"/>
    <property type="evidence" value="ECO:0007669"/>
    <property type="project" value="UniProtKB-UniRule"/>
</dbReference>
<dbReference type="CDD" id="cd00387">
    <property type="entry name" value="Ribosomal_L7_L12"/>
    <property type="match status" value="1"/>
</dbReference>
<dbReference type="FunFam" id="3.30.1390.10:FF:000001">
    <property type="entry name" value="50S ribosomal protein L7/L12"/>
    <property type="match status" value="1"/>
</dbReference>
<dbReference type="Gene3D" id="3.30.1390.10">
    <property type="match status" value="1"/>
</dbReference>
<dbReference type="Gene3D" id="1.20.5.710">
    <property type="entry name" value="Single helix bin"/>
    <property type="match status" value="1"/>
</dbReference>
<dbReference type="HAMAP" id="MF_00368">
    <property type="entry name" value="Ribosomal_bL12"/>
    <property type="match status" value="1"/>
</dbReference>
<dbReference type="InterPro" id="IPR000206">
    <property type="entry name" value="Ribosomal_bL12"/>
</dbReference>
<dbReference type="InterPro" id="IPR013823">
    <property type="entry name" value="Ribosomal_bL12_C"/>
</dbReference>
<dbReference type="InterPro" id="IPR014719">
    <property type="entry name" value="Ribosomal_bL12_C/ClpS-like"/>
</dbReference>
<dbReference type="InterPro" id="IPR008932">
    <property type="entry name" value="Ribosomal_bL12_oligo"/>
</dbReference>
<dbReference type="InterPro" id="IPR036235">
    <property type="entry name" value="Ribosomal_bL12_oligo_N_sf"/>
</dbReference>
<dbReference type="NCBIfam" id="TIGR00855">
    <property type="entry name" value="L12"/>
    <property type="match status" value="1"/>
</dbReference>
<dbReference type="PANTHER" id="PTHR45987">
    <property type="entry name" value="39S RIBOSOMAL PROTEIN L12"/>
    <property type="match status" value="1"/>
</dbReference>
<dbReference type="PANTHER" id="PTHR45987:SF4">
    <property type="entry name" value="LARGE RIBOSOMAL SUBUNIT PROTEIN BL12M"/>
    <property type="match status" value="1"/>
</dbReference>
<dbReference type="Pfam" id="PF00542">
    <property type="entry name" value="Ribosomal_L12"/>
    <property type="match status" value="1"/>
</dbReference>
<dbReference type="Pfam" id="PF16320">
    <property type="entry name" value="Ribosomal_L12_N"/>
    <property type="match status" value="1"/>
</dbReference>
<dbReference type="SUPFAM" id="SSF54736">
    <property type="entry name" value="ClpS-like"/>
    <property type="match status" value="1"/>
</dbReference>
<dbReference type="SUPFAM" id="SSF48300">
    <property type="entry name" value="Ribosomal protein L7/12, oligomerisation (N-terminal) domain"/>
    <property type="match status" value="1"/>
</dbReference>
<protein>
    <recommendedName>
        <fullName evidence="1">Large ribosomal subunit protein bL12</fullName>
    </recommendedName>
    <alternativeName>
        <fullName evidence="2">50S ribosomal protein L7/L12</fullName>
    </alternativeName>
</protein>
<evidence type="ECO:0000255" key="1">
    <source>
        <dbReference type="HAMAP-Rule" id="MF_00368"/>
    </source>
</evidence>
<evidence type="ECO:0000305" key="2"/>
<feature type="chain" id="PRO_0000157532" description="Large ribosomal subunit protein bL12">
    <location>
        <begin position="1"/>
        <end position="120"/>
    </location>
</feature>
<comment type="function">
    <text evidence="1">Forms part of the ribosomal stalk which helps the ribosome interact with GTP-bound translation factors. Is thus essential for accurate translation.</text>
</comment>
<comment type="subunit">
    <text evidence="1">Homodimer. Part of the ribosomal stalk of the 50S ribosomal subunit. Forms a multimeric L10(L12)X complex, where L10 forms an elongated spine to which 2 to 4 L12 dimers bind in a sequential fashion. Binds GTP-bound translation factors.</text>
</comment>
<comment type="similarity">
    <text evidence="1">Belongs to the bacterial ribosomal protein bL12 family.</text>
</comment>